<comment type="catalytic activity">
    <reaction>
        <text>tRNA(Arg) + L-arginine + ATP = L-arginyl-tRNA(Arg) + AMP + diphosphate</text>
        <dbReference type="Rhea" id="RHEA:20301"/>
        <dbReference type="Rhea" id="RHEA-COMP:9658"/>
        <dbReference type="Rhea" id="RHEA-COMP:9673"/>
        <dbReference type="ChEBI" id="CHEBI:30616"/>
        <dbReference type="ChEBI" id="CHEBI:32682"/>
        <dbReference type="ChEBI" id="CHEBI:33019"/>
        <dbReference type="ChEBI" id="CHEBI:78442"/>
        <dbReference type="ChEBI" id="CHEBI:78513"/>
        <dbReference type="ChEBI" id="CHEBI:456215"/>
        <dbReference type="EC" id="6.1.1.19"/>
    </reaction>
</comment>
<comment type="subunit">
    <text evidence="1">Monomer.</text>
</comment>
<comment type="subcellular location">
    <subcellularLocation>
        <location evidence="1">Cytoplasm</location>
    </subcellularLocation>
</comment>
<comment type="similarity">
    <text evidence="2">Belongs to the class-I aminoacyl-tRNA synthetase family.</text>
</comment>
<feature type="chain" id="PRO_0000151578" description="Arginine--tRNA ligase">
    <location>
        <begin position="1"/>
        <end position="537"/>
    </location>
</feature>
<feature type="short sequence motif" description="'HIGH' region">
    <location>
        <begin position="113"/>
        <end position="123"/>
    </location>
</feature>
<reference key="1">
    <citation type="journal article" date="1996" name="Nucleic Acids Res.">
        <title>Complete sequence analysis of the genome of the bacterium Mycoplasma pneumoniae.</title>
        <authorList>
            <person name="Himmelreich R."/>
            <person name="Hilbert H."/>
            <person name="Plagens H."/>
            <person name="Pirkl E."/>
            <person name="Li B.-C."/>
            <person name="Herrmann R."/>
        </authorList>
    </citation>
    <scope>NUCLEOTIDE SEQUENCE [LARGE SCALE GENOMIC DNA]</scope>
    <source>
        <strain>ATCC 29342 / M129 / Subtype 1</strain>
    </source>
</reference>
<protein>
    <recommendedName>
        <fullName>Arginine--tRNA ligase</fullName>
        <ecNumber>6.1.1.19</ecNumber>
    </recommendedName>
    <alternativeName>
        <fullName>Arginyl-tRNA synthetase</fullName>
        <shortName>ArgRS</shortName>
    </alternativeName>
</protein>
<sequence>MLFINTDLQECLNALNLEFDEHKELVKLVKNNSFSGFASTVVFHLKGVNQKETAQQIAAWLLKHKKAHYRRVFVANNNFINFEISPQKYLDFLKTKPTFAPKPTKVLIEWVSANPTGELHLGHVRNAFFGHVLNNLMVFLGFQTVREYWVNDYGQQARVFGFSVYQALHLQQNIKVTPHPDGYEGELVDSIAKTITGIPLDKLSFEEFLQQPFLDQLLADCTAKVLEVIKQDLATIHIHFDSWKFESQVVKETDYKKLLTQFKDEAHYEKDGAIWLKTTLYGDDKDRVLVRQDNRPSYFGTDVAYHLDKAARGFDLLYDIWGSDHEGHIKRMHCVYEGLKIHQKCQLKITALQLVMLYKNKEIVRLSKRAGNVITIKQMLQMLSEDAARWFMLSQTNNSIIKIDLDTANLQNSSNPVYYVQYAYARMCSVLKVVDQAALAQVNDCSLLTHEKEIALLDQLVYFKSLLEKVQVSHELHLLTNYLYETATLFHSWYKACKINDPAQYNLTQQRLLLLQSLHHVFGQLLQILNITAPQQM</sequence>
<proteinExistence type="inferred from homology"/>
<evidence type="ECO:0000250" key="1"/>
<evidence type="ECO:0000305" key="2"/>
<name>SYR_MYCPN</name>
<dbReference type="EC" id="6.1.1.19"/>
<dbReference type="EMBL" id="U00089">
    <property type="protein sequence ID" value="AAB95934.1"/>
    <property type="molecule type" value="Genomic_DNA"/>
</dbReference>
<dbReference type="PIR" id="S73612">
    <property type="entry name" value="S73612"/>
</dbReference>
<dbReference type="RefSeq" id="NP_110245.1">
    <property type="nucleotide sequence ID" value="NC_000912.1"/>
</dbReference>
<dbReference type="RefSeq" id="WP_010874913.1">
    <property type="nucleotide sequence ID" value="NZ_OU342337.1"/>
</dbReference>
<dbReference type="SMR" id="P75222"/>
<dbReference type="IntAct" id="P75222">
    <property type="interactions" value="2"/>
</dbReference>
<dbReference type="STRING" id="272634.MPN_556"/>
<dbReference type="EnsemblBacteria" id="AAB95934">
    <property type="protein sequence ID" value="AAB95934"/>
    <property type="gene ID" value="MPN_556"/>
</dbReference>
<dbReference type="KEGG" id="mpn:MPN_556"/>
<dbReference type="PATRIC" id="fig|272634.6.peg.618"/>
<dbReference type="HOGENOM" id="CLU_006406_0_1_14"/>
<dbReference type="OrthoDB" id="9805987at2"/>
<dbReference type="BioCyc" id="MPNE272634:G1GJ3-912-MONOMER"/>
<dbReference type="Proteomes" id="UP000000808">
    <property type="component" value="Chromosome"/>
</dbReference>
<dbReference type="GO" id="GO:0005737">
    <property type="term" value="C:cytoplasm"/>
    <property type="evidence" value="ECO:0007669"/>
    <property type="project" value="UniProtKB-SubCell"/>
</dbReference>
<dbReference type="GO" id="GO:0004814">
    <property type="term" value="F:arginine-tRNA ligase activity"/>
    <property type="evidence" value="ECO:0007669"/>
    <property type="project" value="UniProtKB-UniRule"/>
</dbReference>
<dbReference type="GO" id="GO:0005524">
    <property type="term" value="F:ATP binding"/>
    <property type="evidence" value="ECO:0007669"/>
    <property type="project" value="UniProtKB-UniRule"/>
</dbReference>
<dbReference type="GO" id="GO:0006420">
    <property type="term" value="P:arginyl-tRNA aminoacylation"/>
    <property type="evidence" value="ECO:0007669"/>
    <property type="project" value="UniProtKB-UniRule"/>
</dbReference>
<dbReference type="CDD" id="cd00671">
    <property type="entry name" value="ArgRS_core"/>
    <property type="match status" value="1"/>
</dbReference>
<dbReference type="Gene3D" id="3.40.50.620">
    <property type="entry name" value="HUPs"/>
    <property type="match status" value="1"/>
</dbReference>
<dbReference type="Gene3D" id="1.10.730.10">
    <property type="entry name" value="Isoleucyl-tRNA Synthetase, Domain 1"/>
    <property type="match status" value="1"/>
</dbReference>
<dbReference type="HAMAP" id="MF_00123">
    <property type="entry name" value="Arg_tRNA_synth"/>
    <property type="match status" value="1"/>
</dbReference>
<dbReference type="InterPro" id="IPR001412">
    <property type="entry name" value="aa-tRNA-synth_I_CS"/>
</dbReference>
<dbReference type="InterPro" id="IPR001278">
    <property type="entry name" value="Arg-tRNA-ligase"/>
</dbReference>
<dbReference type="InterPro" id="IPR035684">
    <property type="entry name" value="ArgRS_core"/>
</dbReference>
<dbReference type="InterPro" id="IPR008909">
    <property type="entry name" value="DALR_anticod-bd"/>
</dbReference>
<dbReference type="InterPro" id="IPR014729">
    <property type="entry name" value="Rossmann-like_a/b/a_fold"/>
</dbReference>
<dbReference type="InterPro" id="IPR009080">
    <property type="entry name" value="tRNAsynth_Ia_anticodon-bd"/>
</dbReference>
<dbReference type="NCBIfam" id="TIGR00456">
    <property type="entry name" value="argS"/>
    <property type="match status" value="1"/>
</dbReference>
<dbReference type="PANTHER" id="PTHR11956:SF5">
    <property type="entry name" value="ARGININE--TRNA LIGASE, CYTOPLASMIC"/>
    <property type="match status" value="1"/>
</dbReference>
<dbReference type="PANTHER" id="PTHR11956">
    <property type="entry name" value="ARGINYL-TRNA SYNTHETASE"/>
    <property type="match status" value="1"/>
</dbReference>
<dbReference type="Pfam" id="PF05746">
    <property type="entry name" value="DALR_1"/>
    <property type="match status" value="1"/>
</dbReference>
<dbReference type="Pfam" id="PF00750">
    <property type="entry name" value="tRNA-synt_1d"/>
    <property type="match status" value="1"/>
</dbReference>
<dbReference type="PRINTS" id="PR01038">
    <property type="entry name" value="TRNASYNTHARG"/>
</dbReference>
<dbReference type="SMART" id="SM00836">
    <property type="entry name" value="DALR_1"/>
    <property type="match status" value="1"/>
</dbReference>
<dbReference type="SUPFAM" id="SSF47323">
    <property type="entry name" value="Anticodon-binding domain of a subclass of class I aminoacyl-tRNA synthetases"/>
    <property type="match status" value="1"/>
</dbReference>
<dbReference type="SUPFAM" id="SSF52374">
    <property type="entry name" value="Nucleotidylyl transferase"/>
    <property type="match status" value="1"/>
</dbReference>
<dbReference type="PROSITE" id="PS00178">
    <property type="entry name" value="AA_TRNA_LIGASE_I"/>
    <property type="match status" value="1"/>
</dbReference>
<keyword id="KW-0030">Aminoacyl-tRNA synthetase</keyword>
<keyword id="KW-0067">ATP-binding</keyword>
<keyword id="KW-0963">Cytoplasm</keyword>
<keyword id="KW-0436">Ligase</keyword>
<keyword id="KW-0547">Nucleotide-binding</keyword>
<keyword id="KW-0648">Protein biosynthesis</keyword>
<keyword id="KW-1185">Reference proteome</keyword>
<organism>
    <name type="scientific">Mycoplasma pneumoniae (strain ATCC 29342 / M129 / Subtype 1)</name>
    <name type="common">Mycoplasmoides pneumoniae</name>
    <dbReference type="NCBI Taxonomy" id="272634"/>
    <lineage>
        <taxon>Bacteria</taxon>
        <taxon>Bacillati</taxon>
        <taxon>Mycoplasmatota</taxon>
        <taxon>Mycoplasmoidales</taxon>
        <taxon>Mycoplasmoidaceae</taxon>
        <taxon>Mycoplasmoides</taxon>
    </lineage>
</organism>
<gene>
    <name type="primary">argS</name>
    <name type="ordered locus">MPN_556</name>
    <name type="ORF">MP286</name>
</gene>
<accession>P75222</accession>